<dbReference type="EMBL" id="CP001127">
    <property type="protein sequence ID" value="ACF90820.1"/>
    <property type="molecule type" value="Genomic_DNA"/>
</dbReference>
<dbReference type="RefSeq" id="WP_000447529.1">
    <property type="nucleotide sequence ID" value="NC_011094.1"/>
</dbReference>
<dbReference type="SMR" id="B4TXD7"/>
<dbReference type="GeneID" id="93778672"/>
<dbReference type="KEGG" id="sew:SeSA_A3631"/>
<dbReference type="HOGENOM" id="CLU_083987_3_3_6"/>
<dbReference type="Proteomes" id="UP000001865">
    <property type="component" value="Chromosome"/>
</dbReference>
<dbReference type="GO" id="GO:0022625">
    <property type="term" value="C:cytosolic large ribosomal subunit"/>
    <property type="evidence" value="ECO:0007669"/>
    <property type="project" value="TreeGrafter"/>
</dbReference>
<dbReference type="GO" id="GO:0019843">
    <property type="term" value="F:rRNA binding"/>
    <property type="evidence" value="ECO:0007669"/>
    <property type="project" value="UniProtKB-UniRule"/>
</dbReference>
<dbReference type="GO" id="GO:0003735">
    <property type="term" value="F:structural constituent of ribosome"/>
    <property type="evidence" value="ECO:0007669"/>
    <property type="project" value="InterPro"/>
</dbReference>
<dbReference type="GO" id="GO:0006412">
    <property type="term" value="P:translation"/>
    <property type="evidence" value="ECO:0007669"/>
    <property type="project" value="UniProtKB-UniRule"/>
</dbReference>
<dbReference type="CDD" id="cd00336">
    <property type="entry name" value="Ribosomal_L22"/>
    <property type="match status" value="1"/>
</dbReference>
<dbReference type="FunFam" id="3.90.470.10:FF:000001">
    <property type="entry name" value="50S ribosomal protein L22"/>
    <property type="match status" value="1"/>
</dbReference>
<dbReference type="Gene3D" id="3.90.470.10">
    <property type="entry name" value="Ribosomal protein L22/L17"/>
    <property type="match status" value="1"/>
</dbReference>
<dbReference type="HAMAP" id="MF_01331_B">
    <property type="entry name" value="Ribosomal_uL22_B"/>
    <property type="match status" value="1"/>
</dbReference>
<dbReference type="InterPro" id="IPR001063">
    <property type="entry name" value="Ribosomal_uL22"/>
</dbReference>
<dbReference type="InterPro" id="IPR005727">
    <property type="entry name" value="Ribosomal_uL22_bac/chlpt-type"/>
</dbReference>
<dbReference type="InterPro" id="IPR047867">
    <property type="entry name" value="Ribosomal_uL22_bac/org-type"/>
</dbReference>
<dbReference type="InterPro" id="IPR018260">
    <property type="entry name" value="Ribosomal_uL22_CS"/>
</dbReference>
<dbReference type="InterPro" id="IPR036394">
    <property type="entry name" value="Ribosomal_uL22_sf"/>
</dbReference>
<dbReference type="NCBIfam" id="TIGR01044">
    <property type="entry name" value="rplV_bact"/>
    <property type="match status" value="1"/>
</dbReference>
<dbReference type="PANTHER" id="PTHR13501">
    <property type="entry name" value="CHLOROPLAST 50S RIBOSOMAL PROTEIN L22-RELATED"/>
    <property type="match status" value="1"/>
</dbReference>
<dbReference type="PANTHER" id="PTHR13501:SF8">
    <property type="entry name" value="LARGE RIBOSOMAL SUBUNIT PROTEIN UL22M"/>
    <property type="match status" value="1"/>
</dbReference>
<dbReference type="Pfam" id="PF00237">
    <property type="entry name" value="Ribosomal_L22"/>
    <property type="match status" value="1"/>
</dbReference>
<dbReference type="SUPFAM" id="SSF54843">
    <property type="entry name" value="Ribosomal protein L22"/>
    <property type="match status" value="1"/>
</dbReference>
<dbReference type="PROSITE" id="PS00464">
    <property type="entry name" value="RIBOSOMAL_L22"/>
    <property type="match status" value="1"/>
</dbReference>
<proteinExistence type="inferred from homology"/>
<protein>
    <recommendedName>
        <fullName evidence="1">Large ribosomal subunit protein uL22</fullName>
    </recommendedName>
    <alternativeName>
        <fullName evidence="2">50S ribosomal protein L22</fullName>
    </alternativeName>
</protein>
<reference key="1">
    <citation type="journal article" date="2011" name="J. Bacteriol.">
        <title>Comparative genomics of 28 Salmonella enterica isolates: evidence for CRISPR-mediated adaptive sublineage evolution.</title>
        <authorList>
            <person name="Fricke W.F."/>
            <person name="Mammel M.K."/>
            <person name="McDermott P.F."/>
            <person name="Tartera C."/>
            <person name="White D.G."/>
            <person name="Leclerc J.E."/>
            <person name="Ravel J."/>
            <person name="Cebula T.A."/>
        </authorList>
    </citation>
    <scope>NUCLEOTIDE SEQUENCE [LARGE SCALE GENOMIC DNA]</scope>
    <source>
        <strain>CVM19633</strain>
    </source>
</reference>
<comment type="function">
    <text evidence="1">This protein binds specifically to 23S rRNA; its binding is stimulated by other ribosomal proteins, e.g. L4, L17, and L20. It is important during the early stages of 50S assembly. It makes multiple contacts with different domains of the 23S rRNA in the assembled 50S subunit and ribosome (By similarity).</text>
</comment>
<comment type="function">
    <text evidence="1">The globular domain of the protein is located near the polypeptide exit tunnel on the outside of the subunit, while an extended beta-hairpin is found that lines the wall of the exit tunnel in the center of the 70S ribosome.</text>
</comment>
<comment type="subunit">
    <text evidence="1">Part of the 50S ribosomal subunit.</text>
</comment>
<comment type="similarity">
    <text evidence="1">Belongs to the universal ribosomal protein uL22 family.</text>
</comment>
<feature type="chain" id="PRO_1000142308" description="Large ribosomal subunit protein uL22">
    <location>
        <begin position="1"/>
        <end position="110"/>
    </location>
</feature>
<organism>
    <name type="scientific">Salmonella schwarzengrund (strain CVM19633)</name>
    <dbReference type="NCBI Taxonomy" id="439843"/>
    <lineage>
        <taxon>Bacteria</taxon>
        <taxon>Pseudomonadati</taxon>
        <taxon>Pseudomonadota</taxon>
        <taxon>Gammaproteobacteria</taxon>
        <taxon>Enterobacterales</taxon>
        <taxon>Enterobacteriaceae</taxon>
        <taxon>Salmonella</taxon>
    </lineage>
</organism>
<gene>
    <name evidence="1" type="primary">rplV</name>
    <name type="ordered locus">SeSA_A3631</name>
</gene>
<keyword id="KW-0687">Ribonucleoprotein</keyword>
<keyword id="KW-0689">Ribosomal protein</keyword>
<keyword id="KW-0694">RNA-binding</keyword>
<keyword id="KW-0699">rRNA-binding</keyword>
<evidence type="ECO:0000255" key="1">
    <source>
        <dbReference type="HAMAP-Rule" id="MF_01331"/>
    </source>
</evidence>
<evidence type="ECO:0000305" key="2"/>
<accession>B4TXD7</accession>
<name>RL22_SALSV</name>
<sequence>METIAKHRHARSSAQKVRLVADLIRGKKVSQALDILTYTNKKAAVLVKKVLESAIANAEHNDGADIDDLKVTKIFVDEGPSMKRIMPRAKGRADRILKRTSHITVVVSDR</sequence>